<protein>
    <recommendedName>
        <fullName evidence="1">Translation initiation factor IF-1</fullName>
    </recommendedName>
</protein>
<sequence>MAKKDGVIEIEGVVTEALPNAMFRVELTNKHVVLAHISGKMRQHYIRILPEDRVVVELSPYDLTRGRIVYRYK</sequence>
<name>IF1_PAEAT</name>
<dbReference type="EMBL" id="CP000474">
    <property type="protein sequence ID" value="ABM07978.1"/>
    <property type="molecule type" value="Genomic_DNA"/>
</dbReference>
<dbReference type="RefSeq" id="WP_011775571.1">
    <property type="nucleotide sequence ID" value="NC_008711.1"/>
</dbReference>
<dbReference type="SMR" id="A1R8R9"/>
<dbReference type="STRING" id="290340.AAur_2922"/>
<dbReference type="GeneID" id="97301766"/>
<dbReference type="KEGG" id="aau:AAur_2922"/>
<dbReference type="eggNOG" id="COG0361">
    <property type="taxonomic scope" value="Bacteria"/>
</dbReference>
<dbReference type="HOGENOM" id="CLU_151267_1_0_11"/>
<dbReference type="OrthoDB" id="9803250at2"/>
<dbReference type="Proteomes" id="UP000000637">
    <property type="component" value="Chromosome"/>
</dbReference>
<dbReference type="GO" id="GO:0005829">
    <property type="term" value="C:cytosol"/>
    <property type="evidence" value="ECO:0007669"/>
    <property type="project" value="TreeGrafter"/>
</dbReference>
<dbReference type="GO" id="GO:0043022">
    <property type="term" value="F:ribosome binding"/>
    <property type="evidence" value="ECO:0007669"/>
    <property type="project" value="UniProtKB-UniRule"/>
</dbReference>
<dbReference type="GO" id="GO:0019843">
    <property type="term" value="F:rRNA binding"/>
    <property type="evidence" value="ECO:0007669"/>
    <property type="project" value="UniProtKB-UniRule"/>
</dbReference>
<dbReference type="GO" id="GO:0003743">
    <property type="term" value="F:translation initiation factor activity"/>
    <property type="evidence" value="ECO:0007669"/>
    <property type="project" value="UniProtKB-UniRule"/>
</dbReference>
<dbReference type="CDD" id="cd04451">
    <property type="entry name" value="S1_IF1"/>
    <property type="match status" value="1"/>
</dbReference>
<dbReference type="FunFam" id="2.40.50.140:FF:000002">
    <property type="entry name" value="Translation initiation factor IF-1"/>
    <property type="match status" value="1"/>
</dbReference>
<dbReference type="Gene3D" id="2.40.50.140">
    <property type="entry name" value="Nucleic acid-binding proteins"/>
    <property type="match status" value="1"/>
</dbReference>
<dbReference type="HAMAP" id="MF_00075">
    <property type="entry name" value="IF_1"/>
    <property type="match status" value="1"/>
</dbReference>
<dbReference type="InterPro" id="IPR012340">
    <property type="entry name" value="NA-bd_OB-fold"/>
</dbReference>
<dbReference type="InterPro" id="IPR006196">
    <property type="entry name" value="RNA-binding_domain_S1_IF1"/>
</dbReference>
<dbReference type="InterPro" id="IPR004368">
    <property type="entry name" value="TIF_IF1"/>
</dbReference>
<dbReference type="NCBIfam" id="TIGR00008">
    <property type="entry name" value="infA"/>
    <property type="match status" value="1"/>
</dbReference>
<dbReference type="PANTHER" id="PTHR33370">
    <property type="entry name" value="TRANSLATION INITIATION FACTOR IF-1, CHLOROPLASTIC"/>
    <property type="match status" value="1"/>
</dbReference>
<dbReference type="PANTHER" id="PTHR33370:SF1">
    <property type="entry name" value="TRANSLATION INITIATION FACTOR IF-1, CHLOROPLASTIC"/>
    <property type="match status" value="1"/>
</dbReference>
<dbReference type="Pfam" id="PF01176">
    <property type="entry name" value="eIF-1a"/>
    <property type="match status" value="1"/>
</dbReference>
<dbReference type="SUPFAM" id="SSF50249">
    <property type="entry name" value="Nucleic acid-binding proteins"/>
    <property type="match status" value="1"/>
</dbReference>
<dbReference type="PROSITE" id="PS50832">
    <property type="entry name" value="S1_IF1_TYPE"/>
    <property type="match status" value="1"/>
</dbReference>
<gene>
    <name evidence="1" type="primary">infA</name>
    <name type="ordered locus">AAur_2922</name>
</gene>
<accession>A1R8R9</accession>
<comment type="function">
    <text evidence="1">One of the essential components for the initiation of protein synthesis. Stabilizes the binding of IF-2 and IF-3 on the 30S subunit to which N-formylmethionyl-tRNA(fMet) subsequently binds. Helps modulate mRNA selection, yielding the 30S pre-initiation complex (PIC). Upon addition of the 50S ribosomal subunit IF-1, IF-2 and IF-3 are released leaving the mature 70S translation initiation complex.</text>
</comment>
<comment type="subunit">
    <text evidence="1">Component of the 30S ribosomal translation pre-initiation complex which assembles on the 30S ribosome in the order IF-2 and IF-3, IF-1 and N-formylmethionyl-tRNA(fMet); mRNA recruitment can occur at any time during PIC assembly.</text>
</comment>
<comment type="subcellular location">
    <subcellularLocation>
        <location evidence="1">Cytoplasm</location>
    </subcellularLocation>
</comment>
<comment type="similarity">
    <text evidence="1">Belongs to the IF-1 family.</text>
</comment>
<reference key="1">
    <citation type="journal article" date="2006" name="PLoS Genet.">
        <title>Secrets of soil survival revealed by the genome sequence of Arthrobacter aurescens TC1.</title>
        <authorList>
            <person name="Mongodin E.F."/>
            <person name="Shapir N."/>
            <person name="Daugherty S.C."/>
            <person name="DeBoy R.T."/>
            <person name="Emerson J.B."/>
            <person name="Shvartzbeyn A."/>
            <person name="Radune D."/>
            <person name="Vamathevan J."/>
            <person name="Riggs F."/>
            <person name="Grinberg V."/>
            <person name="Khouri H.M."/>
            <person name="Wackett L.P."/>
            <person name="Nelson K.E."/>
            <person name="Sadowsky M.J."/>
        </authorList>
    </citation>
    <scope>NUCLEOTIDE SEQUENCE [LARGE SCALE GENOMIC DNA]</scope>
    <source>
        <strain>TC1</strain>
    </source>
</reference>
<proteinExistence type="inferred from homology"/>
<organism>
    <name type="scientific">Paenarthrobacter aurescens (strain TC1)</name>
    <dbReference type="NCBI Taxonomy" id="290340"/>
    <lineage>
        <taxon>Bacteria</taxon>
        <taxon>Bacillati</taxon>
        <taxon>Actinomycetota</taxon>
        <taxon>Actinomycetes</taxon>
        <taxon>Micrococcales</taxon>
        <taxon>Micrococcaceae</taxon>
        <taxon>Paenarthrobacter</taxon>
    </lineage>
</organism>
<evidence type="ECO:0000255" key="1">
    <source>
        <dbReference type="HAMAP-Rule" id="MF_00075"/>
    </source>
</evidence>
<keyword id="KW-0963">Cytoplasm</keyword>
<keyword id="KW-0396">Initiation factor</keyword>
<keyword id="KW-0648">Protein biosynthesis</keyword>
<keyword id="KW-0694">RNA-binding</keyword>
<keyword id="KW-0699">rRNA-binding</keyword>
<feature type="chain" id="PRO_0000338760" description="Translation initiation factor IF-1">
    <location>
        <begin position="1"/>
        <end position="73"/>
    </location>
</feature>
<feature type="domain" description="S1-like" evidence="1">
    <location>
        <begin position="1"/>
        <end position="73"/>
    </location>
</feature>